<comment type="cofactor">
    <cofactor evidence="1">
        <name>heme</name>
        <dbReference type="ChEBI" id="CHEBI:30413"/>
    </cofactor>
    <text evidence="1">Binds 1 heme group per subunit.</text>
</comment>
<comment type="subunit">
    <text>Monomer.</text>
</comment>
<comment type="similarity">
    <text evidence="3">Belongs to the truncated hemoglobin family. Group I subfamily.</text>
</comment>
<reference key="1">
    <citation type="journal article" date="1993" name="Biochim. Biophys. Acta">
        <title>Primary structure of Tetrahymena hemoglobins.</title>
        <authorList>
            <person name="Takagi T."/>
            <person name="Iwaasa H."/>
            <person name="Yuasa H."/>
            <person name="Shikama K."/>
            <person name="Takemasa T."/>
            <person name="Watanabe Y."/>
        </authorList>
    </citation>
    <scope>NUCLEOTIDE SEQUENCE [MRNA]</scope>
</reference>
<reference key="2">
    <citation type="journal article" date="1990" name="J. Biol. Chem.">
        <title>Protozoan hemoglobin from Tetrahymena pyriformis. Isolation, characterization, and amino acid sequence.</title>
        <authorList>
            <person name="Iwaasa H."/>
            <person name="Takagi T."/>
            <person name="Shikama K."/>
        </authorList>
    </citation>
    <scope>PROTEIN SEQUENCE</scope>
    <scope>ACETYLATION AT MET-1</scope>
</reference>
<proteinExistence type="evidence at protein level"/>
<dbReference type="EMBL" id="D13920">
    <property type="protein sequence ID" value="BAA03015.1"/>
    <property type="molecule type" value="mRNA"/>
</dbReference>
<dbReference type="PIR" id="S32555">
    <property type="entry name" value="A36270"/>
</dbReference>
<dbReference type="PDB" id="3AQ5">
    <property type="method" value="X-ray"/>
    <property type="resolution" value="1.78 A"/>
    <property type="chains" value="A/B=1-121"/>
</dbReference>
<dbReference type="PDB" id="3AQ6">
    <property type="method" value="X-ray"/>
    <property type="resolution" value="1.93 A"/>
    <property type="chains" value="A/B=1-121"/>
</dbReference>
<dbReference type="PDB" id="3AQ7">
    <property type="method" value="X-ray"/>
    <property type="resolution" value="1.77 A"/>
    <property type="chains" value="A/B=1-121"/>
</dbReference>
<dbReference type="PDB" id="3AQ8">
    <property type="method" value="X-ray"/>
    <property type="resolution" value="1.83 A"/>
    <property type="chains" value="A/B=1-121"/>
</dbReference>
<dbReference type="PDB" id="3AQ9">
    <property type="method" value="X-ray"/>
    <property type="resolution" value="1.74 A"/>
    <property type="chains" value="A/B=1-121"/>
</dbReference>
<dbReference type="PDBsum" id="3AQ5"/>
<dbReference type="PDBsum" id="3AQ6"/>
<dbReference type="PDBsum" id="3AQ7"/>
<dbReference type="PDBsum" id="3AQ8"/>
<dbReference type="PDBsum" id="3AQ9"/>
<dbReference type="SMR" id="P17724"/>
<dbReference type="iPTMnet" id="P17724"/>
<dbReference type="EvolutionaryTrace" id="P17724"/>
<dbReference type="GO" id="GO:0020037">
    <property type="term" value="F:heme binding"/>
    <property type="evidence" value="ECO:0007669"/>
    <property type="project" value="InterPro"/>
</dbReference>
<dbReference type="GO" id="GO:0046872">
    <property type="term" value="F:metal ion binding"/>
    <property type="evidence" value="ECO:0007669"/>
    <property type="project" value="UniProtKB-KW"/>
</dbReference>
<dbReference type="GO" id="GO:0019825">
    <property type="term" value="F:oxygen binding"/>
    <property type="evidence" value="ECO:0007669"/>
    <property type="project" value="InterPro"/>
</dbReference>
<dbReference type="GO" id="GO:0005344">
    <property type="term" value="F:oxygen carrier activity"/>
    <property type="evidence" value="ECO:0007669"/>
    <property type="project" value="UniProtKB-KW"/>
</dbReference>
<dbReference type="CDD" id="cd14756">
    <property type="entry name" value="TrHb"/>
    <property type="match status" value="1"/>
</dbReference>
<dbReference type="Gene3D" id="1.10.490.10">
    <property type="entry name" value="Globins"/>
    <property type="match status" value="1"/>
</dbReference>
<dbReference type="InterPro" id="IPR009050">
    <property type="entry name" value="Globin-like_sf"/>
</dbReference>
<dbReference type="InterPro" id="IPR012292">
    <property type="entry name" value="Globin/Proto"/>
</dbReference>
<dbReference type="InterPro" id="IPR019795">
    <property type="entry name" value="Globin_bac-like_CS"/>
</dbReference>
<dbReference type="InterPro" id="IPR001486">
    <property type="entry name" value="Hemoglobin_trunc"/>
</dbReference>
<dbReference type="InterPro" id="IPR016339">
    <property type="entry name" value="Hemoglobin_trunc_I"/>
</dbReference>
<dbReference type="Pfam" id="PF01152">
    <property type="entry name" value="Bac_globin"/>
    <property type="match status" value="1"/>
</dbReference>
<dbReference type="PIRSF" id="PIRSF002030">
    <property type="entry name" value="Globin_Protozoa/Cyanobacteria"/>
    <property type="match status" value="1"/>
</dbReference>
<dbReference type="SUPFAM" id="SSF46458">
    <property type="entry name" value="Globin-like"/>
    <property type="match status" value="1"/>
</dbReference>
<dbReference type="PROSITE" id="PS01213">
    <property type="entry name" value="GLOBIN_FAM_2"/>
    <property type="match status" value="1"/>
</dbReference>
<feature type="chain" id="PRO_0000162649" description="Group 1 truncated hemoglobin">
    <location>
        <begin position="1"/>
        <end position="121"/>
    </location>
</feature>
<feature type="binding site" description="proximal binding residue" evidence="2">
    <location>
        <position position="73"/>
    </location>
    <ligand>
        <name>heme</name>
        <dbReference type="ChEBI" id="CHEBI:30413"/>
    </ligand>
    <ligandPart>
        <name>Fe</name>
        <dbReference type="ChEBI" id="CHEBI:18248"/>
    </ligandPart>
</feature>
<feature type="modified residue" description="N-acetylmethionine" evidence="4">
    <location>
        <position position="1"/>
    </location>
</feature>
<feature type="helix" evidence="5">
    <location>
        <begin position="7"/>
        <end position="11"/>
    </location>
</feature>
<feature type="helix" evidence="5">
    <location>
        <begin position="13"/>
        <end position="28"/>
    </location>
</feature>
<feature type="turn" evidence="5">
    <location>
        <begin position="32"/>
        <end position="34"/>
    </location>
</feature>
<feature type="helix" evidence="5">
    <location>
        <begin position="35"/>
        <end position="38"/>
    </location>
</feature>
<feature type="helix" evidence="5">
    <location>
        <begin position="43"/>
        <end position="57"/>
    </location>
</feature>
<feature type="helix" evidence="5">
    <location>
        <begin position="69"/>
        <end position="72"/>
    </location>
</feature>
<feature type="turn" evidence="5">
    <location>
        <begin position="73"/>
        <end position="75"/>
    </location>
</feature>
<feature type="helix" evidence="5">
    <location>
        <begin position="80"/>
        <end position="96"/>
    </location>
</feature>
<feature type="helix" evidence="5">
    <location>
        <begin position="101"/>
        <end position="112"/>
    </location>
</feature>
<feature type="helix" evidence="5">
    <location>
        <begin position="115"/>
        <end position="118"/>
    </location>
</feature>
<organism>
    <name type="scientific">Tetrahymena pyriformis</name>
    <dbReference type="NCBI Taxonomy" id="5908"/>
    <lineage>
        <taxon>Eukaryota</taxon>
        <taxon>Sar</taxon>
        <taxon>Alveolata</taxon>
        <taxon>Ciliophora</taxon>
        <taxon>Intramacronucleata</taxon>
        <taxon>Oligohymenophorea</taxon>
        <taxon>Hymenostomatida</taxon>
        <taxon>Tetrahymenina</taxon>
        <taxon>Tetrahymenidae</taxon>
        <taxon>Tetrahymena</taxon>
    </lineage>
</organism>
<name>TRHBN_TETPY</name>
<accession>P17724</accession>
<keyword id="KW-0002">3D-structure</keyword>
<keyword id="KW-0007">Acetylation</keyword>
<keyword id="KW-0903">Direct protein sequencing</keyword>
<keyword id="KW-0349">Heme</keyword>
<keyword id="KW-0408">Iron</keyword>
<keyword id="KW-0479">Metal-binding</keyword>
<keyword id="KW-0561">Oxygen transport</keyword>
<keyword id="KW-0813">Transport</keyword>
<protein>
    <recommendedName>
        <fullName>Group 1 truncated hemoglobin</fullName>
        <shortName>Truncated Hb</shortName>
    </recommendedName>
    <alternativeName>
        <fullName>Hemoglobin</fullName>
    </alternativeName>
    <alternativeName>
        <fullName>Myoglobin</fullName>
    </alternativeName>
</protein>
<evidence type="ECO:0000250" key="1"/>
<evidence type="ECO:0000255" key="2"/>
<evidence type="ECO:0000305" key="3"/>
<evidence type="ECO:0000305" key="4">
    <source>
    </source>
</evidence>
<evidence type="ECO:0007829" key="5">
    <source>
        <dbReference type="PDB" id="3AQ9"/>
    </source>
</evidence>
<sequence>MNKPQTIYEKLGGENAMKAAVPLFYKKVLADERVKHFFKNTDMDHQTKQQTDFLTMLLGGPNHYKGKNMTEAHKGMNLQNLHFDAIIENLAATLKELGVTDAVINEAAKVIEHTRKDMLGK</sequence>